<accession>Q9HFU9</accession>
<proteinExistence type="inferred from homology"/>
<name>OAZ_SCHJP</name>
<protein>
    <recommendedName>
        <fullName>Ornithine decarboxylase antizyme</fullName>
        <shortName>ODC-Az</shortName>
    </recommendedName>
</protein>
<gene>
    <name type="primary">spa1</name>
</gene>
<keyword id="KW-0688">Ribosomal frameshifting</keyword>
<evidence type="ECO:0000250" key="1">
    <source>
        <dbReference type="UniProtKB" id="Q02803"/>
    </source>
</evidence>
<evidence type="ECO:0000305" key="2"/>
<organism>
    <name type="scientific">Schizosaccharomyces japonicus</name>
    <name type="common">Fission yeast</name>
    <dbReference type="NCBI Taxonomy" id="4897"/>
    <lineage>
        <taxon>Eukaryota</taxon>
        <taxon>Fungi</taxon>
        <taxon>Dikarya</taxon>
        <taxon>Ascomycota</taxon>
        <taxon>Taphrinomycotina</taxon>
        <taxon>Schizosaccharomycetes</taxon>
        <taxon>Schizosaccharomycetales</taxon>
        <taxon>Schizosaccharomycetaceae</taxon>
        <taxon>Schizosaccharomyces</taxon>
    </lineage>
</organism>
<sequence length="226" mass="25805">MAFRNPIYQLSNTEDLNLDIINAPSLENSRRSSATLAVCTTEDSKFLYGTTPSGGAEWCSEGINSVRPSKRLLRRRRHVPRWISDSFRTCLPKSSGNLKEQALQPSLDRNPCRNGQADEALRNKRIGIAEPSNYWHGIIEETYDEHHQRQRNLHLIPENWQDVNLKNGLVAIIDLATDHLQCSKLIIYVDKHLPNLPYLVKSFHWVGFEPIAHPNCVDHAVFGMDL</sequence>
<reference key="1">
    <citation type="journal article" date="2000" name="Nucleic Acids Res.">
        <title>Antizyme expression: a subversion of triplet decoding, which is remarkably conserved by evolution, is a sensor for an autoregulatory circuit.</title>
        <authorList>
            <person name="Ivanov I.P."/>
            <person name="Gesteland R.F."/>
            <person name="Atkins J.F."/>
        </authorList>
    </citation>
    <scope>NUCLEOTIDE SEQUENCE [GENOMIC DNA]</scope>
</reference>
<comment type="function">
    <text evidence="1">Ornithine decarboxylase (ODC) antizyme protein that negatively regulates ODC activity and intracellular polyamine biosynthesis in response to increased intracellular polyamine levels. Binds to ODC monomers, inhibiting the assembly of the functional ODC homodimer, and targets the monomers for ubiquitin-independent proteolytic destruction by the 26S proteasome.</text>
</comment>
<comment type="subunit">
    <text evidence="1">Interacts with ODC and thereby sterically blocks ODC homodimerization.</text>
</comment>
<comment type="alternative products">
    <event type="ribosomal frameshifting"/>
    <isoform>
        <id>Q9HFU9-1</id>
        <name>1</name>
        <sequence type="displayed"/>
    </isoform>
    <text>A ribosomal frameshift occurs between the codons for Ser-60 and Glu-61. An autoregulatory mechanism enables modulation of frameshifting according to the cellular concentration of polyamines.</text>
</comment>
<comment type="similarity">
    <text evidence="2">Belongs to the ODC antizyme family.</text>
</comment>
<feature type="chain" id="PRO_0000220868" description="Ornithine decarboxylase antizyme">
    <location>
        <begin position="1"/>
        <end position="226"/>
    </location>
</feature>
<dbReference type="EMBL" id="AF291572">
    <property type="protein sequence ID" value="AAG16232.1"/>
    <property type="molecule type" value="Genomic_DNA"/>
</dbReference>
<dbReference type="VEuPathDB" id="FungiDB:SJAG_04546"/>
<dbReference type="GO" id="GO:0005737">
    <property type="term" value="C:cytoplasm"/>
    <property type="evidence" value="ECO:0007669"/>
    <property type="project" value="TreeGrafter"/>
</dbReference>
<dbReference type="GO" id="GO:0005634">
    <property type="term" value="C:nucleus"/>
    <property type="evidence" value="ECO:0007669"/>
    <property type="project" value="TreeGrafter"/>
</dbReference>
<dbReference type="GO" id="GO:0008073">
    <property type="term" value="F:ornithine decarboxylase inhibitor activity"/>
    <property type="evidence" value="ECO:0007669"/>
    <property type="project" value="InterPro"/>
</dbReference>
<dbReference type="GO" id="GO:0045732">
    <property type="term" value="P:positive regulation of protein catabolic process"/>
    <property type="evidence" value="ECO:0007669"/>
    <property type="project" value="TreeGrafter"/>
</dbReference>
<dbReference type="GO" id="GO:0075523">
    <property type="term" value="P:viral translational frameshifting"/>
    <property type="evidence" value="ECO:0007669"/>
    <property type="project" value="UniProtKB-KW"/>
</dbReference>
<dbReference type="Gene3D" id="3.40.630.60">
    <property type="match status" value="1"/>
</dbReference>
<dbReference type="InterPro" id="IPR016181">
    <property type="entry name" value="Acyl_CoA_acyltransferase"/>
</dbReference>
<dbReference type="InterPro" id="IPR002993">
    <property type="entry name" value="ODC_AZ"/>
</dbReference>
<dbReference type="InterPro" id="IPR038581">
    <property type="entry name" value="ODC_AZ_sf"/>
</dbReference>
<dbReference type="PANTHER" id="PTHR10279">
    <property type="entry name" value="ORNITHINE DECARBOXYLASE ANTIZYME"/>
    <property type="match status" value="1"/>
</dbReference>
<dbReference type="PANTHER" id="PTHR10279:SF10">
    <property type="entry name" value="ORNITHINE DECARBOXYLASE ANTIZYME"/>
    <property type="match status" value="1"/>
</dbReference>
<dbReference type="Pfam" id="PF02100">
    <property type="entry name" value="ODC_AZ"/>
    <property type="match status" value="1"/>
</dbReference>
<dbReference type="SUPFAM" id="SSF55729">
    <property type="entry name" value="Acyl-CoA N-acyltransferases (Nat)"/>
    <property type="match status" value="1"/>
</dbReference>